<evidence type="ECO:0000255" key="1">
    <source>
        <dbReference type="HAMAP-Rule" id="MF_00693"/>
    </source>
</evidence>
<organism>
    <name type="scientific">Clostridium botulinum (strain Okra / Type B1)</name>
    <dbReference type="NCBI Taxonomy" id="498213"/>
    <lineage>
        <taxon>Bacteria</taxon>
        <taxon>Bacillati</taxon>
        <taxon>Bacillota</taxon>
        <taxon>Clostridia</taxon>
        <taxon>Eubacteriales</taxon>
        <taxon>Clostridiaceae</taxon>
        <taxon>Clostridium</taxon>
    </lineage>
</organism>
<keyword id="KW-0963">Cytoplasm</keyword>
<keyword id="KW-0238">DNA-binding</keyword>
<keyword id="KW-0804">Transcription</keyword>
<keyword id="KW-0805">Transcription regulation</keyword>
<feature type="chain" id="PRO_1000132176" description="Probable transcriptional regulatory protein CLD_1467">
    <location>
        <begin position="1"/>
        <end position="246"/>
    </location>
</feature>
<proteinExistence type="inferred from homology"/>
<gene>
    <name type="ordered locus">CLD_1467</name>
</gene>
<dbReference type="EMBL" id="CP000939">
    <property type="protein sequence ID" value="ACA46238.1"/>
    <property type="molecule type" value="Genomic_DNA"/>
</dbReference>
<dbReference type="RefSeq" id="WP_003403625.1">
    <property type="nucleotide sequence ID" value="NC_010516.1"/>
</dbReference>
<dbReference type="SMR" id="B1IMF6"/>
<dbReference type="KEGG" id="cbb:CLD_1467"/>
<dbReference type="HOGENOM" id="CLU_062974_2_2_9"/>
<dbReference type="Proteomes" id="UP000008541">
    <property type="component" value="Chromosome"/>
</dbReference>
<dbReference type="GO" id="GO:0005829">
    <property type="term" value="C:cytosol"/>
    <property type="evidence" value="ECO:0007669"/>
    <property type="project" value="TreeGrafter"/>
</dbReference>
<dbReference type="GO" id="GO:0003677">
    <property type="term" value="F:DNA binding"/>
    <property type="evidence" value="ECO:0007669"/>
    <property type="project" value="UniProtKB-UniRule"/>
</dbReference>
<dbReference type="GO" id="GO:0006355">
    <property type="term" value="P:regulation of DNA-templated transcription"/>
    <property type="evidence" value="ECO:0007669"/>
    <property type="project" value="UniProtKB-UniRule"/>
</dbReference>
<dbReference type="FunFam" id="1.10.10.200:FF:000002">
    <property type="entry name" value="Probable transcriptional regulatory protein CLM62_37755"/>
    <property type="match status" value="1"/>
</dbReference>
<dbReference type="FunFam" id="3.30.70.980:FF:000002">
    <property type="entry name" value="Probable transcriptional regulatory protein YebC"/>
    <property type="match status" value="1"/>
</dbReference>
<dbReference type="Gene3D" id="1.10.10.200">
    <property type="match status" value="1"/>
</dbReference>
<dbReference type="Gene3D" id="3.30.70.980">
    <property type="match status" value="2"/>
</dbReference>
<dbReference type="HAMAP" id="MF_00693">
    <property type="entry name" value="Transcrip_reg_TACO1"/>
    <property type="match status" value="1"/>
</dbReference>
<dbReference type="InterPro" id="IPR017856">
    <property type="entry name" value="Integrase-like_N"/>
</dbReference>
<dbReference type="InterPro" id="IPR048300">
    <property type="entry name" value="TACO1_YebC-like_2nd/3rd_dom"/>
</dbReference>
<dbReference type="InterPro" id="IPR049083">
    <property type="entry name" value="TACO1_YebC_N"/>
</dbReference>
<dbReference type="InterPro" id="IPR002876">
    <property type="entry name" value="Transcrip_reg_TACO1-like"/>
</dbReference>
<dbReference type="InterPro" id="IPR026564">
    <property type="entry name" value="Transcrip_reg_TACO1-like_dom3"/>
</dbReference>
<dbReference type="InterPro" id="IPR029072">
    <property type="entry name" value="YebC-like"/>
</dbReference>
<dbReference type="NCBIfam" id="NF001030">
    <property type="entry name" value="PRK00110.1"/>
    <property type="match status" value="1"/>
</dbReference>
<dbReference type="NCBIfam" id="NF009044">
    <property type="entry name" value="PRK12378.1"/>
    <property type="match status" value="1"/>
</dbReference>
<dbReference type="NCBIfam" id="TIGR01033">
    <property type="entry name" value="YebC/PmpR family DNA-binding transcriptional regulator"/>
    <property type="match status" value="1"/>
</dbReference>
<dbReference type="PANTHER" id="PTHR12532:SF6">
    <property type="entry name" value="TRANSCRIPTIONAL REGULATORY PROTEIN YEBC-RELATED"/>
    <property type="match status" value="1"/>
</dbReference>
<dbReference type="PANTHER" id="PTHR12532">
    <property type="entry name" value="TRANSLATIONAL ACTIVATOR OF CYTOCHROME C OXIDASE 1"/>
    <property type="match status" value="1"/>
</dbReference>
<dbReference type="Pfam" id="PF20772">
    <property type="entry name" value="TACO1_YebC_N"/>
    <property type="match status" value="1"/>
</dbReference>
<dbReference type="Pfam" id="PF01709">
    <property type="entry name" value="Transcrip_reg"/>
    <property type="match status" value="1"/>
</dbReference>
<dbReference type="SUPFAM" id="SSF75625">
    <property type="entry name" value="YebC-like"/>
    <property type="match status" value="1"/>
</dbReference>
<reference key="1">
    <citation type="journal article" date="2007" name="PLoS ONE">
        <title>Analysis of the neurotoxin complex genes in Clostridium botulinum A1-A4 and B1 strains: BoNT/A3, /Ba4 and /B1 clusters are located within plasmids.</title>
        <authorList>
            <person name="Smith T.J."/>
            <person name="Hill K.K."/>
            <person name="Foley B.T."/>
            <person name="Detter J.C."/>
            <person name="Munk A.C."/>
            <person name="Bruce D.C."/>
            <person name="Doggett N.A."/>
            <person name="Smith L.A."/>
            <person name="Marks J.D."/>
            <person name="Xie G."/>
            <person name="Brettin T.S."/>
        </authorList>
    </citation>
    <scope>NUCLEOTIDE SEQUENCE [LARGE SCALE GENOMIC DNA]</scope>
    <source>
        <strain>Okra / Type B1</strain>
    </source>
</reference>
<comment type="subcellular location">
    <subcellularLocation>
        <location evidence="1">Cytoplasm</location>
    </subcellularLocation>
</comment>
<comment type="similarity">
    <text evidence="1">Belongs to the TACO1 family.</text>
</comment>
<name>Y1467_CLOBK</name>
<accession>B1IMF6</accession>
<sequence length="246" mass="27050">MSGHSKWHNIQAKKGKADAKRGKIFTKIGKEIVVAVKQGGPSADSNPRLRDVIAKAKANNMPNDTIERSIKKASGELNAVDYETITYEGYGPAGIAVLVDVLTDNKNRSAGNVRYAFTKQGGNMGSTGCVSFMFQSKGQIVIEKKDGLDEDELMMMALDAGAEDFESEDEVYVVATSQEDFGTVREALEAEGLEFLEAEIKMVPDTYTAIDEDTATKFQKMLDVLEDDDDVQNVYHNAEFPEGWEE</sequence>
<protein>
    <recommendedName>
        <fullName evidence="1">Probable transcriptional regulatory protein CLD_1467</fullName>
    </recommendedName>
</protein>